<reference key="1">
    <citation type="journal article" date="2002" name="Genome Res.">
        <title>The genome of Methanosarcina acetivorans reveals extensive metabolic and physiological diversity.</title>
        <authorList>
            <person name="Galagan J.E."/>
            <person name="Nusbaum C."/>
            <person name="Roy A."/>
            <person name="Endrizzi M.G."/>
            <person name="Macdonald P."/>
            <person name="FitzHugh W."/>
            <person name="Calvo S."/>
            <person name="Engels R."/>
            <person name="Smirnov S."/>
            <person name="Atnoor D."/>
            <person name="Brown A."/>
            <person name="Allen N."/>
            <person name="Naylor J."/>
            <person name="Stange-Thomann N."/>
            <person name="DeArellano K."/>
            <person name="Johnson R."/>
            <person name="Linton L."/>
            <person name="McEwan P."/>
            <person name="McKernan K."/>
            <person name="Talamas J."/>
            <person name="Tirrell A."/>
            <person name="Ye W."/>
            <person name="Zimmer A."/>
            <person name="Barber R.D."/>
            <person name="Cann I."/>
            <person name="Graham D.E."/>
            <person name="Grahame D.A."/>
            <person name="Guss A.M."/>
            <person name="Hedderich R."/>
            <person name="Ingram-Smith C."/>
            <person name="Kuettner H.C."/>
            <person name="Krzycki J.A."/>
            <person name="Leigh J.A."/>
            <person name="Li W."/>
            <person name="Liu J."/>
            <person name="Mukhopadhyay B."/>
            <person name="Reeve J.N."/>
            <person name="Smith K."/>
            <person name="Springer T.A."/>
            <person name="Umayam L.A."/>
            <person name="White O."/>
            <person name="White R.H."/>
            <person name="de Macario E.C."/>
            <person name="Ferry J.G."/>
            <person name="Jarrell K.F."/>
            <person name="Jing H."/>
            <person name="Macario A.J.L."/>
            <person name="Paulsen I.T."/>
            <person name="Pritchett M."/>
            <person name="Sowers K.R."/>
            <person name="Swanson R.V."/>
            <person name="Zinder S.H."/>
            <person name="Lander E."/>
            <person name="Metcalf W.W."/>
            <person name="Birren B."/>
        </authorList>
    </citation>
    <scope>NUCLEOTIDE SEQUENCE [LARGE SCALE GENOMIC DNA]</scope>
    <source>
        <strain>ATCC 35395 / DSM 2834 / JCM 12185 / C2A</strain>
    </source>
</reference>
<organism>
    <name type="scientific">Methanosarcina acetivorans (strain ATCC 35395 / DSM 2834 / JCM 12185 / C2A)</name>
    <dbReference type="NCBI Taxonomy" id="188937"/>
    <lineage>
        <taxon>Archaea</taxon>
        <taxon>Methanobacteriati</taxon>
        <taxon>Methanobacteriota</taxon>
        <taxon>Stenosarchaea group</taxon>
        <taxon>Methanomicrobia</taxon>
        <taxon>Methanosarcinales</taxon>
        <taxon>Methanosarcinaceae</taxon>
        <taxon>Methanosarcina</taxon>
    </lineage>
</organism>
<sequence length="128" mass="14222">MKQQVEVKDLKEGKYVIIDDEACVIKSISKSKPGKHGAAKARVEAIGLFDNQKRSYIGSVANKIYVPIVERKSAQVISITGDIAQLMDMGDFSTFEIVIPDEYKDKVKEGEEVSYITALGKIKLDIRT</sequence>
<accession>Q8TJ03</accession>
<dbReference type="EMBL" id="AE010299">
    <property type="protein sequence ID" value="AAM07336.1"/>
    <property type="molecule type" value="Genomic_DNA"/>
</dbReference>
<dbReference type="RefSeq" id="WP_011023881.1">
    <property type="nucleotide sequence ID" value="NC_003552.1"/>
</dbReference>
<dbReference type="SMR" id="Q8TJ03"/>
<dbReference type="FunCoup" id="Q8TJ03">
    <property type="interactions" value="111"/>
</dbReference>
<dbReference type="STRING" id="188937.MA_3987"/>
<dbReference type="EnsemblBacteria" id="AAM07336">
    <property type="protein sequence ID" value="AAM07336"/>
    <property type="gene ID" value="MA_3987"/>
</dbReference>
<dbReference type="GeneID" id="1475880"/>
<dbReference type="KEGG" id="mac:MA_3987"/>
<dbReference type="HOGENOM" id="CLU_102600_3_0_2"/>
<dbReference type="InParanoid" id="Q8TJ03"/>
<dbReference type="OrthoDB" id="23689at2157"/>
<dbReference type="PhylomeDB" id="Q8TJ03"/>
<dbReference type="Proteomes" id="UP000002487">
    <property type="component" value="Chromosome"/>
</dbReference>
<dbReference type="GO" id="GO:0005737">
    <property type="term" value="C:cytoplasm"/>
    <property type="evidence" value="ECO:0007669"/>
    <property type="project" value="UniProtKB-SubCell"/>
</dbReference>
<dbReference type="GO" id="GO:0043022">
    <property type="term" value="F:ribosome binding"/>
    <property type="evidence" value="ECO:0007669"/>
    <property type="project" value="InterPro"/>
</dbReference>
<dbReference type="GO" id="GO:0003723">
    <property type="term" value="F:RNA binding"/>
    <property type="evidence" value="ECO:0007669"/>
    <property type="project" value="InterPro"/>
</dbReference>
<dbReference type="GO" id="GO:0003746">
    <property type="term" value="F:translation elongation factor activity"/>
    <property type="evidence" value="ECO:0000318"/>
    <property type="project" value="GO_Central"/>
</dbReference>
<dbReference type="GO" id="GO:0003743">
    <property type="term" value="F:translation initiation factor activity"/>
    <property type="evidence" value="ECO:0007669"/>
    <property type="project" value="UniProtKB-UniRule"/>
</dbReference>
<dbReference type="GO" id="GO:0045901">
    <property type="term" value="P:positive regulation of translational elongation"/>
    <property type="evidence" value="ECO:0007669"/>
    <property type="project" value="InterPro"/>
</dbReference>
<dbReference type="GO" id="GO:0045905">
    <property type="term" value="P:positive regulation of translational termination"/>
    <property type="evidence" value="ECO:0007669"/>
    <property type="project" value="InterPro"/>
</dbReference>
<dbReference type="GO" id="GO:0006414">
    <property type="term" value="P:translational elongation"/>
    <property type="evidence" value="ECO:0000318"/>
    <property type="project" value="GO_Central"/>
</dbReference>
<dbReference type="CDD" id="cd04467">
    <property type="entry name" value="S1_aIF5A"/>
    <property type="match status" value="1"/>
</dbReference>
<dbReference type="FunFam" id="2.30.30.30:FF:000038">
    <property type="entry name" value="Translation initiation factor 5A"/>
    <property type="match status" value="1"/>
</dbReference>
<dbReference type="FunFam" id="2.40.50.140:FF:000447">
    <property type="entry name" value="Translation initiation factor 5A"/>
    <property type="match status" value="1"/>
</dbReference>
<dbReference type="Gene3D" id="2.30.30.30">
    <property type="match status" value="1"/>
</dbReference>
<dbReference type="Gene3D" id="2.40.50.140">
    <property type="entry name" value="Nucleic acid-binding proteins"/>
    <property type="match status" value="1"/>
</dbReference>
<dbReference type="HAMAP" id="MF_00085">
    <property type="entry name" value="eIF_5A"/>
    <property type="match status" value="1"/>
</dbReference>
<dbReference type="InterPro" id="IPR001884">
    <property type="entry name" value="IF5A-like"/>
</dbReference>
<dbReference type="InterPro" id="IPR048670">
    <property type="entry name" value="IF5A-like_N"/>
</dbReference>
<dbReference type="InterPro" id="IPR012340">
    <property type="entry name" value="NA-bd_OB-fold"/>
</dbReference>
<dbReference type="InterPro" id="IPR014722">
    <property type="entry name" value="Rib_uL2_dom2"/>
</dbReference>
<dbReference type="InterPro" id="IPR019769">
    <property type="entry name" value="Trans_elong_IF5A_hypusine_site"/>
</dbReference>
<dbReference type="InterPro" id="IPR022847">
    <property type="entry name" value="Transl_elong_IF5A_arc"/>
</dbReference>
<dbReference type="InterPro" id="IPR020189">
    <property type="entry name" value="Transl_elong_IF5A_C"/>
</dbReference>
<dbReference type="InterPro" id="IPR008991">
    <property type="entry name" value="Translation_prot_SH3-like_sf"/>
</dbReference>
<dbReference type="NCBIfam" id="TIGR00037">
    <property type="entry name" value="eIF_5A"/>
    <property type="match status" value="1"/>
</dbReference>
<dbReference type="NCBIfam" id="NF003076">
    <property type="entry name" value="PRK03999.1"/>
    <property type="match status" value="1"/>
</dbReference>
<dbReference type="PANTHER" id="PTHR11673">
    <property type="entry name" value="TRANSLATION INITIATION FACTOR 5A FAMILY MEMBER"/>
    <property type="match status" value="1"/>
</dbReference>
<dbReference type="Pfam" id="PF01287">
    <property type="entry name" value="eIF-5a"/>
    <property type="match status" value="1"/>
</dbReference>
<dbReference type="Pfam" id="PF21485">
    <property type="entry name" value="IF5A-like_N"/>
    <property type="match status" value="1"/>
</dbReference>
<dbReference type="PIRSF" id="PIRSF003025">
    <property type="entry name" value="eIF5A"/>
    <property type="match status" value="1"/>
</dbReference>
<dbReference type="SMART" id="SM01376">
    <property type="entry name" value="eIF-5a"/>
    <property type="match status" value="1"/>
</dbReference>
<dbReference type="SUPFAM" id="SSF50249">
    <property type="entry name" value="Nucleic acid-binding proteins"/>
    <property type="match status" value="1"/>
</dbReference>
<dbReference type="SUPFAM" id="SSF50104">
    <property type="entry name" value="Translation proteins SH3-like domain"/>
    <property type="match status" value="1"/>
</dbReference>
<dbReference type="PROSITE" id="PS00302">
    <property type="entry name" value="IF5A_HYPUSINE"/>
    <property type="match status" value="1"/>
</dbReference>
<evidence type="ECO:0000250" key="1"/>
<evidence type="ECO:0000305" key="2"/>
<comment type="function">
    <text evidence="1">Functions by promoting the formation of the first peptide bond.</text>
</comment>
<comment type="subcellular location">
    <subcellularLocation>
        <location evidence="1">Cytoplasm</location>
    </subcellularLocation>
</comment>
<comment type="similarity">
    <text evidence="2">Belongs to the eIF-5A family.</text>
</comment>
<keyword id="KW-0963">Cytoplasm</keyword>
<keyword id="KW-0385">Hypusine</keyword>
<keyword id="KW-0396">Initiation factor</keyword>
<keyword id="KW-0648">Protein biosynthesis</keyword>
<keyword id="KW-1185">Reference proteome</keyword>
<name>IF5A_METAC</name>
<protein>
    <recommendedName>
        <fullName>Translation initiation factor 5A</fullName>
    </recommendedName>
    <alternativeName>
        <fullName>Hypusine-containing protein</fullName>
    </alternativeName>
    <alternativeName>
        <fullName>eIF-5A</fullName>
    </alternativeName>
</protein>
<gene>
    <name type="primary">eif5a</name>
    <name type="ordered locus">MA_3987</name>
</gene>
<feature type="chain" id="PRO_0000142492" description="Translation initiation factor 5A">
    <location>
        <begin position="1"/>
        <end position="128"/>
    </location>
</feature>
<feature type="modified residue" description="Hypusine" evidence="1">
    <location>
        <position position="35"/>
    </location>
</feature>
<proteinExistence type="inferred from homology"/>